<gene>
    <name evidence="1" type="primary">ileS</name>
    <name type="ordered locus">PFL_5321</name>
</gene>
<sequence>MTDYKATLNLPDTAFPMKAGLPQREPQILQRWDSIGLYGKLREIGKDRPKFVLHDGPPYANGSIHIGHAVNKILKDMIIRSKTLAGFDAPYVPGWDCHGLPIEHKVEVTHGKNLSSDQTRELCRAYASEQIEGQKAEFIRLGVLGDWANPYKTMNFANEAGEIRALAEMVKGGFVFKGLKPVNWCFDCGSALAEAEVEYQDKKSATIDVAFPVADEAKLAGAFGLAKLAKPAAIVIWTTTPWTIPANQALNVHPEFNYALVDTGERLLVLAEELVESCLARYNLEGSVIATAPGSALELINFRHPFYDRLSPVYLAEYVELGAGTGVVHSAPAYGEDDFVTCKRYGMVNDDILNPVQSNGVYATSLEFFGGQFIWKANPAIVDKLSEVGALLHTETISHSYMHCWRHKTPLIYRATAQWFVGMDKQPAAGDTLRQRALQAIEDTQFVPAWGQARLHSMIANRPDWCISRQRNWGVPIPFFLNKESGDLHPRTVELMEEVAQRVEQEGIEAWFKMDAAELLGDEAAQYDKISDTLDVWFDSGTTHWHVLRGSHPMGHESGPRADLYLEGSDQHRGWFHSSLLTGCAIDNHAPYRELLTHGFTVDENGRKMSKSLGNVIAPQKVNDTLGADIMRLWVSATDYSGEMAVSDQILQRSADAYRRIRNTARFLLSNLSGFNPATDLLPAEDMLALDRWAVDRTLLLQRELELHYGEYRFWNVYSKVHNFCVQELGGFYLDIIKDRQYTTGANSKARRSAQTALYHISEALVRWIAPILAFTADELWEYLPGERNESVMLNTWYEGLTELPADFELGREYWEGVMAVKVAVNKELEVQRAAKAVGGNLQAEVTLFAEDGLAADLAKLSNELRFVLITSTASLAPFAQAPADAVATEVPGLKLKVVKSAFPKCARCWHCREDVGVHPEHPEICGRCVDNISGAGEVRHYA</sequence>
<reference key="1">
    <citation type="journal article" date="2005" name="Nat. Biotechnol.">
        <title>Complete genome sequence of the plant commensal Pseudomonas fluorescens Pf-5.</title>
        <authorList>
            <person name="Paulsen I.T."/>
            <person name="Press C.M."/>
            <person name="Ravel J."/>
            <person name="Kobayashi D.Y."/>
            <person name="Myers G.S.A."/>
            <person name="Mavrodi D.V."/>
            <person name="DeBoy R.T."/>
            <person name="Seshadri R."/>
            <person name="Ren Q."/>
            <person name="Madupu R."/>
            <person name="Dodson R.J."/>
            <person name="Durkin A.S."/>
            <person name="Brinkac L.M."/>
            <person name="Daugherty S.C."/>
            <person name="Sullivan S.A."/>
            <person name="Rosovitz M.J."/>
            <person name="Gwinn M.L."/>
            <person name="Zhou L."/>
            <person name="Schneider D.J."/>
            <person name="Cartinhour S.W."/>
            <person name="Nelson W.C."/>
            <person name="Weidman J."/>
            <person name="Watkins K."/>
            <person name="Tran K."/>
            <person name="Khouri H."/>
            <person name="Pierson E.A."/>
            <person name="Pierson L.S. III"/>
            <person name="Thomashow L.S."/>
            <person name="Loper J.E."/>
        </authorList>
    </citation>
    <scope>NUCLEOTIDE SEQUENCE [LARGE SCALE GENOMIC DNA]</scope>
    <source>
        <strain>ATCC BAA-477 / NRRL B-23932 / Pf-5</strain>
    </source>
</reference>
<proteinExistence type="inferred from homology"/>
<keyword id="KW-0030">Aminoacyl-tRNA synthetase</keyword>
<keyword id="KW-0067">ATP-binding</keyword>
<keyword id="KW-0963">Cytoplasm</keyword>
<keyword id="KW-0436">Ligase</keyword>
<keyword id="KW-0479">Metal-binding</keyword>
<keyword id="KW-0547">Nucleotide-binding</keyword>
<keyword id="KW-0648">Protein biosynthesis</keyword>
<keyword id="KW-0862">Zinc</keyword>
<feature type="chain" id="PRO_0000098446" description="Isoleucine--tRNA ligase">
    <location>
        <begin position="1"/>
        <end position="943"/>
    </location>
</feature>
<feature type="short sequence motif" description="'HIGH' region">
    <location>
        <begin position="58"/>
        <end position="68"/>
    </location>
</feature>
<feature type="short sequence motif" description="'KMSKS' region">
    <location>
        <begin position="608"/>
        <end position="612"/>
    </location>
</feature>
<feature type="binding site" evidence="1">
    <location>
        <position position="567"/>
    </location>
    <ligand>
        <name>L-isoleucyl-5'-AMP</name>
        <dbReference type="ChEBI" id="CHEBI:178002"/>
    </ligand>
</feature>
<feature type="binding site" evidence="1">
    <location>
        <position position="611"/>
    </location>
    <ligand>
        <name>ATP</name>
        <dbReference type="ChEBI" id="CHEBI:30616"/>
    </ligand>
</feature>
<feature type="binding site" evidence="1">
    <location>
        <position position="906"/>
    </location>
    <ligand>
        <name>Zn(2+)</name>
        <dbReference type="ChEBI" id="CHEBI:29105"/>
    </ligand>
</feature>
<feature type="binding site" evidence="1">
    <location>
        <position position="909"/>
    </location>
    <ligand>
        <name>Zn(2+)</name>
        <dbReference type="ChEBI" id="CHEBI:29105"/>
    </ligand>
</feature>
<feature type="binding site" evidence="1">
    <location>
        <position position="926"/>
    </location>
    <ligand>
        <name>Zn(2+)</name>
        <dbReference type="ChEBI" id="CHEBI:29105"/>
    </ligand>
</feature>
<feature type="binding site" evidence="1">
    <location>
        <position position="929"/>
    </location>
    <ligand>
        <name>Zn(2+)</name>
        <dbReference type="ChEBI" id="CHEBI:29105"/>
    </ligand>
</feature>
<organism>
    <name type="scientific">Pseudomonas fluorescens (strain ATCC BAA-477 / NRRL B-23932 / Pf-5)</name>
    <dbReference type="NCBI Taxonomy" id="220664"/>
    <lineage>
        <taxon>Bacteria</taxon>
        <taxon>Pseudomonadati</taxon>
        <taxon>Pseudomonadota</taxon>
        <taxon>Gammaproteobacteria</taxon>
        <taxon>Pseudomonadales</taxon>
        <taxon>Pseudomonadaceae</taxon>
        <taxon>Pseudomonas</taxon>
    </lineage>
</organism>
<dbReference type="EC" id="6.1.1.5" evidence="1"/>
<dbReference type="EMBL" id="CP000076">
    <property type="protein sequence ID" value="AAY94531.1"/>
    <property type="molecule type" value="Genomic_DNA"/>
</dbReference>
<dbReference type="RefSeq" id="WP_011063549.1">
    <property type="nucleotide sequence ID" value="NC_004129.6"/>
</dbReference>
<dbReference type="SMR" id="Q4K5U4"/>
<dbReference type="STRING" id="220664.PFL_5321"/>
<dbReference type="KEGG" id="pfl:PFL_5321"/>
<dbReference type="PATRIC" id="fig|220664.5.peg.5431"/>
<dbReference type="eggNOG" id="COG0060">
    <property type="taxonomic scope" value="Bacteria"/>
</dbReference>
<dbReference type="HOGENOM" id="CLU_001493_7_1_6"/>
<dbReference type="Proteomes" id="UP000008540">
    <property type="component" value="Chromosome"/>
</dbReference>
<dbReference type="GO" id="GO:0005829">
    <property type="term" value="C:cytosol"/>
    <property type="evidence" value="ECO:0007669"/>
    <property type="project" value="TreeGrafter"/>
</dbReference>
<dbReference type="GO" id="GO:0002161">
    <property type="term" value="F:aminoacyl-tRNA deacylase activity"/>
    <property type="evidence" value="ECO:0007669"/>
    <property type="project" value="InterPro"/>
</dbReference>
<dbReference type="GO" id="GO:0005524">
    <property type="term" value="F:ATP binding"/>
    <property type="evidence" value="ECO:0007669"/>
    <property type="project" value="UniProtKB-UniRule"/>
</dbReference>
<dbReference type="GO" id="GO:0004822">
    <property type="term" value="F:isoleucine-tRNA ligase activity"/>
    <property type="evidence" value="ECO:0007669"/>
    <property type="project" value="UniProtKB-UniRule"/>
</dbReference>
<dbReference type="GO" id="GO:0000049">
    <property type="term" value="F:tRNA binding"/>
    <property type="evidence" value="ECO:0007669"/>
    <property type="project" value="InterPro"/>
</dbReference>
<dbReference type="GO" id="GO:0008270">
    <property type="term" value="F:zinc ion binding"/>
    <property type="evidence" value="ECO:0007669"/>
    <property type="project" value="UniProtKB-UniRule"/>
</dbReference>
<dbReference type="GO" id="GO:0006428">
    <property type="term" value="P:isoleucyl-tRNA aminoacylation"/>
    <property type="evidence" value="ECO:0007669"/>
    <property type="project" value="UniProtKB-UniRule"/>
</dbReference>
<dbReference type="CDD" id="cd07960">
    <property type="entry name" value="Anticodon_Ia_Ile_BEm"/>
    <property type="match status" value="1"/>
</dbReference>
<dbReference type="FunFam" id="1.10.730.20:FF:000001">
    <property type="entry name" value="Isoleucine--tRNA ligase"/>
    <property type="match status" value="1"/>
</dbReference>
<dbReference type="FunFam" id="3.40.50.620:FF:000042">
    <property type="entry name" value="Isoleucine--tRNA ligase"/>
    <property type="match status" value="1"/>
</dbReference>
<dbReference type="FunFam" id="3.40.50.620:FF:000048">
    <property type="entry name" value="Isoleucine--tRNA ligase"/>
    <property type="match status" value="1"/>
</dbReference>
<dbReference type="Gene3D" id="1.10.730.20">
    <property type="match status" value="1"/>
</dbReference>
<dbReference type="Gene3D" id="3.40.50.620">
    <property type="entry name" value="HUPs"/>
    <property type="match status" value="2"/>
</dbReference>
<dbReference type="Gene3D" id="1.10.10.830">
    <property type="entry name" value="Ile-tRNA synthetase CP2 domain-like"/>
    <property type="match status" value="1"/>
</dbReference>
<dbReference type="Gene3D" id="3.90.740.10">
    <property type="entry name" value="Valyl/Leucyl/Isoleucyl-tRNA synthetase, editing domain"/>
    <property type="match status" value="1"/>
</dbReference>
<dbReference type="HAMAP" id="MF_02002">
    <property type="entry name" value="Ile_tRNA_synth_type1"/>
    <property type="match status" value="1"/>
</dbReference>
<dbReference type="InterPro" id="IPR001412">
    <property type="entry name" value="aa-tRNA-synth_I_CS"/>
</dbReference>
<dbReference type="InterPro" id="IPR002300">
    <property type="entry name" value="aa-tRNA-synth_Ia"/>
</dbReference>
<dbReference type="InterPro" id="IPR033708">
    <property type="entry name" value="Anticodon_Ile_BEm"/>
</dbReference>
<dbReference type="InterPro" id="IPR002301">
    <property type="entry name" value="Ile-tRNA-ligase"/>
</dbReference>
<dbReference type="InterPro" id="IPR023585">
    <property type="entry name" value="Ile-tRNA-ligase_type1"/>
</dbReference>
<dbReference type="InterPro" id="IPR050081">
    <property type="entry name" value="Ile-tRNA_ligase"/>
</dbReference>
<dbReference type="InterPro" id="IPR013155">
    <property type="entry name" value="M/V/L/I-tRNA-synth_anticd-bd"/>
</dbReference>
<dbReference type="InterPro" id="IPR014729">
    <property type="entry name" value="Rossmann-like_a/b/a_fold"/>
</dbReference>
<dbReference type="InterPro" id="IPR009080">
    <property type="entry name" value="tRNAsynth_Ia_anticodon-bd"/>
</dbReference>
<dbReference type="InterPro" id="IPR009008">
    <property type="entry name" value="Val/Leu/Ile-tRNA-synth_edit"/>
</dbReference>
<dbReference type="InterPro" id="IPR010663">
    <property type="entry name" value="Znf_FPG/IleRS"/>
</dbReference>
<dbReference type="NCBIfam" id="TIGR00392">
    <property type="entry name" value="ileS"/>
    <property type="match status" value="1"/>
</dbReference>
<dbReference type="PANTHER" id="PTHR42765:SF1">
    <property type="entry name" value="ISOLEUCINE--TRNA LIGASE, MITOCHONDRIAL"/>
    <property type="match status" value="1"/>
</dbReference>
<dbReference type="PANTHER" id="PTHR42765">
    <property type="entry name" value="SOLEUCYL-TRNA SYNTHETASE"/>
    <property type="match status" value="1"/>
</dbReference>
<dbReference type="Pfam" id="PF08264">
    <property type="entry name" value="Anticodon_1"/>
    <property type="match status" value="1"/>
</dbReference>
<dbReference type="Pfam" id="PF00133">
    <property type="entry name" value="tRNA-synt_1"/>
    <property type="match status" value="1"/>
</dbReference>
<dbReference type="Pfam" id="PF06827">
    <property type="entry name" value="zf-FPG_IleRS"/>
    <property type="match status" value="1"/>
</dbReference>
<dbReference type="PRINTS" id="PR00984">
    <property type="entry name" value="TRNASYNTHILE"/>
</dbReference>
<dbReference type="SUPFAM" id="SSF47323">
    <property type="entry name" value="Anticodon-binding domain of a subclass of class I aminoacyl-tRNA synthetases"/>
    <property type="match status" value="1"/>
</dbReference>
<dbReference type="SUPFAM" id="SSF52374">
    <property type="entry name" value="Nucleotidylyl transferase"/>
    <property type="match status" value="1"/>
</dbReference>
<dbReference type="SUPFAM" id="SSF50677">
    <property type="entry name" value="ValRS/IleRS/LeuRS editing domain"/>
    <property type="match status" value="1"/>
</dbReference>
<dbReference type="PROSITE" id="PS00178">
    <property type="entry name" value="AA_TRNA_LIGASE_I"/>
    <property type="match status" value="1"/>
</dbReference>
<evidence type="ECO:0000255" key="1">
    <source>
        <dbReference type="HAMAP-Rule" id="MF_02002"/>
    </source>
</evidence>
<comment type="function">
    <text evidence="1">Catalyzes the attachment of isoleucine to tRNA(Ile). As IleRS can inadvertently accommodate and process structurally similar amino acids such as valine, to avoid such errors it has two additional distinct tRNA(Ile)-dependent editing activities. One activity is designated as 'pretransfer' editing and involves the hydrolysis of activated Val-AMP. The other activity is designated 'posttransfer' editing and involves deacylation of mischarged Val-tRNA(Ile).</text>
</comment>
<comment type="catalytic activity">
    <reaction evidence="1">
        <text>tRNA(Ile) + L-isoleucine + ATP = L-isoleucyl-tRNA(Ile) + AMP + diphosphate</text>
        <dbReference type="Rhea" id="RHEA:11060"/>
        <dbReference type="Rhea" id="RHEA-COMP:9666"/>
        <dbReference type="Rhea" id="RHEA-COMP:9695"/>
        <dbReference type="ChEBI" id="CHEBI:30616"/>
        <dbReference type="ChEBI" id="CHEBI:33019"/>
        <dbReference type="ChEBI" id="CHEBI:58045"/>
        <dbReference type="ChEBI" id="CHEBI:78442"/>
        <dbReference type="ChEBI" id="CHEBI:78528"/>
        <dbReference type="ChEBI" id="CHEBI:456215"/>
        <dbReference type="EC" id="6.1.1.5"/>
    </reaction>
</comment>
<comment type="cofactor">
    <cofactor evidence="1">
        <name>Zn(2+)</name>
        <dbReference type="ChEBI" id="CHEBI:29105"/>
    </cofactor>
    <text evidence="1">Binds 1 zinc ion per subunit.</text>
</comment>
<comment type="subunit">
    <text evidence="1">Monomer.</text>
</comment>
<comment type="subcellular location">
    <subcellularLocation>
        <location evidence="1">Cytoplasm</location>
    </subcellularLocation>
</comment>
<comment type="domain">
    <text evidence="1">IleRS has two distinct active sites: one for aminoacylation and one for editing. The misactivated valine is translocated from the active site to the editing site, which sterically excludes the correctly activated isoleucine. The single editing site contains two valyl binding pockets, one specific for each substrate (Val-AMP or Val-tRNA(Ile)).</text>
</comment>
<comment type="similarity">
    <text evidence="1">Belongs to the class-I aminoacyl-tRNA synthetase family. IleS type 1 subfamily.</text>
</comment>
<accession>Q4K5U4</accession>
<protein>
    <recommendedName>
        <fullName evidence="1">Isoleucine--tRNA ligase</fullName>
        <ecNumber evidence="1">6.1.1.5</ecNumber>
    </recommendedName>
    <alternativeName>
        <fullName evidence="1">Isoleucyl-tRNA synthetase</fullName>
        <shortName evidence="1">IleRS</shortName>
    </alternativeName>
</protein>
<name>SYI_PSEF5</name>